<comment type="function">
    <text evidence="2">GTP hydrolase that promotes the GTP-dependent binding of aminoacyl-tRNA to the A-site of ribosomes during protein biosynthesis.</text>
</comment>
<comment type="catalytic activity">
    <reaction evidence="2">
        <text>GTP + H2O = GDP + phosphate + H(+)</text>
        <dbReference type="Rhea" id="RHEA:19669"/>
        <dbReference type="ChEBI" id="CHEBI:15377"/>
        <dbReference type="ChEBI" id="CHEBI:15378"/>
        <dbReference type="ChEBI" id="CHEBI:37565"/>
        <dbReference type="ChEBI" id="CHEBI:43474"/>
        <dbReference type="ChEBI" id="CHEBI:58189"/>
        <dbReference type="EC" id="3.6.5.3"/>
    </reaction>
    <physiologicalReaction direction="left-to-right" evidence="2">
        <dbReference type="Rhea" id="RHEA:19670"/>
    </physiologicalReaction>
</comment>
<comment type="subunit">
    <text evidence="2">Monomer.</text>
</comment>
<comment type="subcellular location">
    <subcellularLocation>
        <location evidence="2">Cytoplasm</location>
    </subcellularLocation>
</comment>
<comment type="similarity">
    <text evidence="2">Belongs to the TRAFAC class translation factor GTPase superfamily. Classic translation factor GTPase family. EF-Tu/EF-1A subfamily.</text>
</comment>
<proteinExistence type="inferred from homology"/>
<keyword id="KW-0963">Cytoplasm</keyword>
<keyword id="KW-0251">Elongation factor</keyword>
<keyword id="KW-0342">GTP-binding</keyword>
<keyword id="KW-0378">Hydrolase</keyword>
<keyword id="KW-0460">Magnesium</keyword>
<keyword id="KW-0479">Metal-binding</keyword>
<keyword id="KW-0547">Nucleotide-binding</keyword>
<keyword id="KW-0648">Protein biosynthesis</keyword>
<reference key="1">
    <citation type="submission" date="2006-10" db="EMBL/GenBank/DDBJ databases">
        <authorList>
            <person name="Fleischmann R.D."/>
            <person name="Dodson R.J."/>
            <person name="Haft D.H."/>
            <person name="Merkel J.S."/>
            <person name="Nelson W.C."/>
            <person name="Fraser C.M."/>
        </authorList>
    </citation>
    <scope>NUCLEOTIDE SEQUENCE [LARGE SCALE GENOMIC DNA]</scope>
    <source>
        <strain>104</strain>
    </source>
</reference>
<accession>A0QL35</accession>
<organism>
    <name type="scientific">Mycobacterium avium (strain 104)</name>
    <dbReference type="NCBI Taxonomy" id="243243"/>
    <lineage>
        <taxon>Bacteria</taxon>
        <taxon>Bacillati</taxon>
        <taxon>Actinomycetota</taxon>
        <taxon>Actinomycetes</taxon>
        <taxon>Mycobacteriales</taxon>
        <taxon>Mycobacteriaceae</taxon>
        <taxon>Mycobacterium</taxon>
        <taxon>Mycobacterium avium complex (MAC)</taxon>
    </lineage>
</organism>
<sequence>MAKAKFERTKPHVNIGTIGHVDHGKTTLTAAITKVLHDKYPDLNESRAFDQIDNAPEERQRGITINISHVEYQTDKRHYAHVDAPGHADYIKNMITGAAQMDGAILVVAATDGPMPQTREHVLLARQVGVPYILVALNKADMVDDEELLELVEMEVRELLAAQEFDEDAPVVRVSALKALEGDAKWVESVEQLMEAVDESIPDPVRETDKPFLMPVEDVFTITGRGTVVTGRVERGVINVNEEVEIVGIRPSSTKTTVTGVEMFRKLLDQGQAGDNVGLLLRGIKREDVERGQVVTKPGTTTPHTEFEGQVYILSKDEGGRHTPFFNNYRPQFYFRTTDVTGVVTLPEGTEMVMPGDNTNISVKLIQPVAMDEGLRFAIREGGRTVGAGRVVKIIK</sequence>
<gene>
    <name evidence="2" type="primary">tuf</name>
    <name type="ordered locus">MAV_4489</name>
</gene>
<name>EFTU_MYCA1</name>
<dbReference type="EC" id="3.6.5.3" evidence="2"/>
<dbReference type="EMBL" id="CP000479">
    <property type="protein sequence ID" value="ABK65347.1"/>
    <property type="molecule type" value="Genomic_DNA"/>
</dbReference>
<dbReference type="RefSeq" id="WP_003873538.1">
    <property type="nucleotide sequence ID" value="NC_008595.1"/>
</dbReference>
<dbReference type="SMR" id="A0QL35"/>
<dbReference type="GeneID" id="75272003"/>
<dbReference type="KEGG" id="mav:MAV_4489"/>
<dbReference type="HOGENOM" id="CLU_007265_0_1_11"/>
<dbReference type="Proteomes" id="UP000001574">
    <property type="component" value="Chromosome"/>
</dbReference>
<dbReference type="GO" id="GO:0005829">
    <property type="term" value="C:cytosol"/>
    <property type="evidence" value="ECO:0007669"/>
    <property type="project" value="TreeGrafter"/>
</dbReference>
<dbReference type="GO" id="GO:0005525">
    <property type="term" value="F:GTP binding"/>
    <property type="evidence" value="ECO:0007669"/>
    <property type="project" value="UniProtKB-UniRule"/>
</dbReference>
<dbReference type="GO" id="GO:0003924">
    <property type="term" value="F:GTPase activity"/>
    <property type="evidence" value="ECO:0007669"/>
    <property type="project" value="InterPro"/>
</dbReference>
<dbReference type="GO" id="GO:0003746">
    <property type="term" value="F:translation elongation factor activity"/>
    <property type="evidence" value="ECO:0007669"/>
    <property type="project" value="UniProtKB-UniRule"/>
</dbReference>
<dbReference type="CDD" id="cd01884">
    <property type="entry name" value="EF_Tu"/>
    <property type="match status" value="1"/>
</dbReference>
<dbReference type="CDD" id="cd03697">
    <property type="entry name" value="EFTU_II"/>
    <property type="match status" value="1"/>
</dbReference>
<dbReference type="CDD" id="cd03707">
    <property type="entry name" value="EFTU_III"/>
    <property type="match status" value="1"/>
</dbReference>
<dbReference type="FunFam" id="2.40.30.10:FF:000001">
    <property type="entry name" value="Elongation factor Tu"/>
    <property type="match status" value="1"/>
</dbReference>
<dbReference type="FunFam" id="3.40.50.300:FF:000003">
    <property type="entry name" value="Elongation factor Tu"/>
    <property type="match status" value="1"/>
</dbReference>
<dbReference type="Gene3D" id="3.40.50.300">
    <property type="entry name" value="P-loop containing nucleotide triphosphate hydrolases"/>
    <property type="match status" value="1"/>
</dbReference>
<dbReference type="Gene3D" id="2.40.30.10">
    <property type="entry name" value="Translation factors"/>
    <property type="match status" value="2"/>
</dbReference>
<dbReference type="HAMAP" id="MF_00118_B">
    <property type="entry name" value="EF_Tu_B"/>
    <property type="match status" value="1"/>
</dbReference>
<dbReference type="InterPro" id="IPR041709">
    <property type="entry name" value="EF-Tu_GTP-bd"/>
</dbReference>
<dbReference type="InterPro" id="IPR050055">
    <property type="entry name" value="EF-Tu_GTPase"/>
</dbReference>
<dbReference type="InterPro" id="IPR004161">
    <property type="entry name" value="EFTu-like_2"/>
</dbReference>
<dbReference type="InterPro" id="IPR033720">
    <property type="entry name" value="EFTU_2"/>
</dbReference>
<dbReference type="InterPro" id="IPR031157">
    <property type="entry name" value="G_TR_CS"/>
</dbReference>
<dbReference type="InterPro" id="IPR027417">
    <property type="entry name" value="P-loop_NTPase"/>
</dbReference>
<dbReference type="InterPro" id="IPR005225">
    <property type="entry name" value="Small_GTP-bd"/>
</dbReference>
<dbReference type="InterPro" id="IPR000795">
    <property type="entry name" value="T_Tr_GTP-bd_dom"/>
</dbReference>
<dbReference type="InterPro" id="IPR009000">
    <property type="entry name" value="Transl_B-barrel_sf"/>
</dbReference>
<dbReference type="InterPro" id="IPR009001">
    <property type="entry name" value="Transl_elong_EF1A/Init_IF2_C"/>
</dbReference>
<dbReference type="InterPro" id="IPR004541">
    <property type="entry name" value="Transl_elong_EFTu/EF1A_bac/org"/>
</dbReference>
<dbReference type="InterPro" id="IPR004160">
    <property type="entry name" value="Transl_elong_EFTu/EF1A_C"/>
</dbReference>
<dbReference type="NCBIfam" id="TIGR00485">
    <property type="entry name" value="EF-Tu"/>
    <property type="match status" value="1"/>
</dbReference>
<dbReference type="NCBIfam" id="NF000766">
    <property type="entry name" value="PRK00049.1"/>
    <property type="match status" value="1"/>
</dbReference>
<dbReference type="NCBIfam" id="NF009372">
    <property type="entry name" value="PRK12735.1"/>
    <property type="match status" value="1"/>
</dbReference>
<dbReference type="NCBIfam" id="NF009373">
    <property type="entry name" value="PRK12736.1"/>
    <property type="match status" value="1"/>
</dbReference>
<dbReference type="NCBIfam" id="TIGR00231">
    <property type="entry name" value="small_GTP"/>
    <property type="match status" value="1"/>
</dbReference>
<dbReference type="PANTHER" id="PTHR43721:SF22">
    <property type="entry name" value="ELONGATION FACTOR TU, MITOCHONDRIAL"/>
    <property type="match status" value="1"/>
</dbReference>
<dbReference type="PANTHER" id="PTHR43721">
    <property type="entry name" value="ELONGATION FACTOR TU-RELATED"/>
    <property type="match status" value="1"/>
</dbReference>
<dbReference type="Pfam" id="PF00009">
    <property type="entry name" value="GTP_EFTU"/>
    <property type="match status" value="1"/>
</dbReference>
<dbReference type="Pfam" id="PF03144">
    <property type="entry name" value="GTP_EFTU_D2"/>
    <property type="match status" value="1"/>
</dbReference>
<dbReference type="Pfam" id="PF03143">
    <property type="entry name" value="GTP_EFTU_D3"/>
    <property type="match status" value="1"/>
</dbReference>
<dbReference type="PRINTS" id="PR00315">
    <property type="entry name" value="ELONGATNFCT"/>
</dbReference>
<dbReference type="SUPFAM" id="SSF50465">
    <property type="entry name" value="EF-Tu/eEF-1alpha/eIF2-gamma C-terminal domain"/>
    <property type="match status" value="1"/>
</dbReference>
<dbReference type="SUPFAM" id="SSF52540">
    <property type="entry name" value="P-loop containing nucleoside triphosphate hydrolases"/>
    <property type="match status" value="1"/>
</dbReference>
<dbReference type="SUPFAM" id="SSF50447">
    <property type="entry name" value="Translation proteins"/>
    <property type="match status" value="1"/>
</dbReference>
<dbReference type="PROSITE" id="PS00301">
    <property type="entry name" value="G_TR_1"/>
    <property type="match status" value="1"/>
</dbReference>
<dbReference type="PROSITE" id="PS51722">
    <property type="entry name" value="G_TR_2"/>
    <property type="match status" value="1"/>
</dbReference>
<protein>
    <recommendedName>
        <fullName evidence="2">Elongation factor Tu</fullName>
        <shortName evidence="2">EF-Tu</shortName>
        <ecNumber evidence="2">3.6.5.3</ecNumber>
    </recommendedName>
</protein>
<feature type="chain" id="PRO_1000015696" description="Elongation factor Tu">
    <location>
        <begin position="1"/>
        <end position="396"/>
    </location>
</feature>
<feature type="domain" description="tr-type G">
    <location>
        <begin position="10"/>
        <end position="205"/>
    </location>
</feature>
<feature type="region of interest" description="G1" evidence="1">
    <location>
        <begin position="19"/>
        <end position="26"/>
    </location>
</feature>
<feature type="region of interest" description="G2" evidence="1">
    <location>
        <begin position="62"/>
        <end position="66"/>
    </location>
</feature>
<feature type="region of interest" description="G3" evidence="1">
    <location>
        <begin position="83"/>
        <end position="86"/>
    </location>
</feature>
<feature type="region of interest" description="G4" evidence="1">
    <location>
        <begin position="138"/>
        <end position="141"/>
    </location>
</feature>
<feature type="region of interest" description="G5" evidence="1">
    <location>
        <begin position="175"/>
        <end position="177"/>
    </location>
</feature>
<feature type="binding site" evidence="2">
    <location>
        <begin position="19"/>
        <end position="26"/>
    </location>
    <ligand>
        <name>GTP</name>
        <dbReference type="ChEBI" id="CHEBI:37565"/>
    </ligand>
</feature>
<feature type="binding site" evidence="2">
    <location>
        <position position="26"/>
    </location>
    <ligand>
        <name>Mg(2+)</name>
        <dbReference type="ChEBI" id="CHEBI:18420"/>
    </ligand>
</feature>
<feature type="binding site" evidence="2">
    <location>
        <begin position="83"/>
        <end position="87"/>
    </location>
    <ligand>
        <name>GTP</name>
        <dbReference type="ChEBI" id="CHEBI:37565"/>
    </ligand>
</feature>
<feature type="binding site" evidence="2">
    <location>
        <begin position="138"/>
        <end position="141"/>
    </location>
    <ligand>
        <name>GTP</name>
        <dbReference type="ChEBI" id="CHEBI:37565"/>
    </ligand>
</feature>
<evidence type="ECO:0000250" key="1"/>
<evidence type="ECO:0000255" key="2">
    <source>
        <dbReference type="HAMAP-Rule" id="MF_00118"/>
    </source>
</evidence>